<gene>
    <name evidence="1" type="primary">MDM34</name>
    <name evidence="1" type="synonym">MMM2</name>
    <name type="ORF">AWRI1631_70400</name>
</gene>
<comment type="function">
    <text evidence="1">Component of the ERMES/MDM complex, which serves as a molecular tether to connect the endoplasmic reticulum (ER) and mitochondria. Components of this complex are involved in the control of mitochondrial shape and protein biogenesis, and function in nonvesicular lipid trafficking between the ER and mitochondria. MDM34 is required for the interaction of the ER-resident membrane protein MMM1 and the outer mitochondrial membrane-resident beta-barrel protein MDM10.</text>
</comment>
<comment type="subunit">
    <text evidence="1">Component of the ER-mitochondria encounter structure (ERMES) or MDM complex, composed of MMM1, MDM10, MDM12 and MDM34.</text>
</comment>
<comment type="subcellular location">
    <subcellularLocation>
        <location evidence="1">Mitochondrion outer membrane</location>
        <topology evidence="1">Multi-pass membrane protein</topology>
    </subcellularLocation>
    <text evidence="1">The ERMES/MDM complex localizes to a few discrete foci (around 10 per single cell), that represent mitochondria-endoplasmic reticulum junctions. These foci are often found next to mtDNA nucleoids.</text>
</comment>
<comment type="domain">
    <text evidence="1">Lacks alpha-helical transmembrane segments, suggesting that it resides in the membrane via beta-sheet conformations similar to those predicted for other outer membrane proteins and porin.</text>
</comment>
<comment type="domain">
    <text evidence="1">The SMP-LTD domain is a barrel-like domain that can bind various types of glycerophospholipids in its interior and mediate their transfer between two adjacent bilayers.</text>
</comment>
<comment type="PTM">
    <text evidence="1">Ubiquitinated by a SCF (SKP1-CUL1-F-box protein) E3 ubiquitin-protein ligase complex containing the F-box protein MDM30. Ubiquitination is important for mitochondrial integrity.</text>
</comment>
<comment type="similarity">
    <text evidence="1">Belongs to the MDM34 family.</text>
</comment>
<accession>B5VIB8</accession>
<reference key="1">
    <citation type="journal article" date="2008" name="FEMS Yeast Res.">
        <title>Comparative genome analysis of a Saccharomyces cerevisiae wine strain.</title>
        <authorList>
            <person name="Borneman A.R."/>
            <person name="Forgan A.H."/>
            <person name="Pretorius I.S."/>
            <person name="Chambers P.J."/>
        </authorList>
    </citation>
    <scope>NUCLEOTIDE SEQUENCE [LARGE SCALE GENOMIC DNA]</scope>
    <source>
        <strain>AWRI1631</strain>
    </source>
</reference>
<organism>
    <name type="scientific">Saccharomyces cerevisiae (strain AWRI1631)</name>
    <name type="common">Baker's yeast</name>
    <dbReference type="NCBI Taxonomy" id="545124"/>
    <lineage>
        <taxon>Eukaryota</taxon>
        <taxon>Fungi</taxon>
        <taxon>Dikarya</taxon>
        <taxon>Ascomycota</taxon>
        <taxon>Saccharomycotina</taxon>
        <taxon>Saccharomycetes</taxon>
        <taxon>Saccharomycetales</taxon>
        <taxon>Saccharomycetaceae</taxon>
        <taxon>Saccharomyces</taxon>
    </lineage>
</organism>
<name>MDM34_YEAS6</name>
<dbReference type="EMBL" id="ABSV01000819">
    <property type="protein sequence ID" value="EDZ72324.1"/>
    <property type="molecule type" value="Genomic_DNA"/>
</dbReference>
<dbReference type="Proteomes" id="UP000008988">
    <property type="component" value="Unassembled WGS sequence"/>
</dbReference>
<dbReference type="GO" id="GO:0032865">
    <property type="term" value="C:ERMES complex"/>
    <property type="evidence" value="ECO:0007669"/>
    <property type="project" value="UniProtKB-UniRule"/>
</dbReference>
<dbReference type="GO" id="GO:0008289">
    <property type="term" value="F:lipid binding"/>
    <property type="evidence" value="ECO:0007669"/>
    <property type="project" value="UniProtKB-KW"/>
</dbReference>
<dbReference type="GO" id="GO:0000002">
    <property type="term" value="P:mitochondrial genome maintenance"/>
    <property type="evidence" value="ECO:0007669"/>
    <property type="project" value="UniProtKB-UniRule"/>
</dbReference>
<dbReference type="GO" id="GO:1990456">
    <property type="term" value="P:mitochondrion-endoplasmic reticulum membrane tethering"/>
    <property type="evidence" value="ECO:0007669"/>
    <property type="project" value="TreeGrafter"/>
</dbReference>
<dbReference type="GO" id="GO:0015914">
    <property type="term" value="P:phospholipid transport"/>
    <property type="evidence" value="ECO:0007669"/>
    <property type="project" value="TreeGrafter"/>
</dbReference>
<dbReference type="CDD" id="cd21673">
    <property type="entry name" value="SMP_Mdm34"/>
    <property type="match status" value="1"/>
</dbReference>
<dbReference type="HAMAP" id="MF_03105">
    <property type="entry name" value="Mdm34"/>
    <property type="match status" value="1"/>
</dbReference>
<dbReference type="InterPro" id="IPR027536">
    <property type="entry name" value="Mdm34"/>
</dbReference>
<dbReference type="InterPro" id="IPR031468">
    <property type="entry name" value="SMP_LBD"/>
</dbReference>
<dbReference type="PANTHER" id="PTHR28185">
    <property type="entry name" value="MITOCHONDRIAL DISTRIBUTION AND MORPHOLOGY PROTEIN 34"/>
    <property type="match status" value="1"/>
</dbReference>
<dbReference type="PANTHER" id="PTHR28185:SF1">
    <property type="entry name" value="MITOCHONDRIAL DISTRIBUTION AND MORPHOLOGY PROTEIN 34"/>
    <property type="match status" value="1"/>
</dbReference>
<dbReference type="PROSITE" id="PS51847">
    <property type="entry name" value="SMP"/>
    <property type="match status" value="1"/>
</dbReference>
<evidence type="ECO:0000255" key="1">
    <source>
        <dbReference type="HAMAP-Rule" id="MF_03105"/>
    </source>
</evidence>
<evidence type="ECO:0000256" key="2">
    <source>
        <dbReference type="SAM" id="MobiDB-lite"/>
    </source>
</evidence>
<proteinExistence type="inferred from homology"/>
<feature type="chain" id="PRO_0000384361" description="Mitochondrial distribution and morphology protein 34">
    <location>
        <begin position="1"/>
        <end position="459"/>
    </location>
</feature>
<feature type="domain" description="SMP-LTD" evidence="1">
    <location>
        <begin position="1"/>
        <end position="190"/>
    </location>
</feature>
<feature type="region of interest" description="Disordered" evidence="2">
    <location>
        <begin position="338"/>
        <end position="375"/>
    </location>
</feature>
<feature type="compositionally biased region" description="Basic and acidic residues" evidence="2">
    <location>
        <begin position="338"/>
        <end position="347"/>
    </location>
</feature>
<feature type="compositionally biased region" description="Basic residues" evidence="2">
    <location>
        <begin position="348"/>
        <end position="359"/>
    </location>
</feature>
<keyword id="KW-0445">Lipid transport</keyword>
<keyword id="KW-0446">Lipid-binding</keyword>
<keyword id="KW-0472">Membrane</keyword>
<keyword id="KW-0496">Mitochondrion</keyword>
<keyword id="KW-1000">Mitochondrion outer membrane</keyword>
<keyword id="KW-0812">Transmembrane</keyword>
<keyword id="KW-1134">Transmembrane beta strand</keyword>
<keyword id="KW-0813">Transport</keyword>
<keyword id="KW-0832">Ubl conjugation</keyword>
<protein>
    <recommendedName>
        <fullName evidence="1">Mitochondrial distribution and morphology protein 34</fullName>
    </recommendedName>
    <alternativeName>
        <fullName evidence="1">Mitochondrial outer membrane protein MMM2</fullName>
    </alternativeName>
</protein>
<sequence length="459" mass="51976">MSFRFNEAVFGDNSFNERVREKLSTALNSPSKKKLDILKSGIKVQKVDFPTIPQLEILDLDIITQPKSLAKGICKISCKDAMLRIQTVIESNLLLINEQDTPSFTMPQLINNGSFTIPITMTFSSIELEAITNIFVKNPGIGISFNDVDLDFKFDCSVKILQSTIERRLKESMHVVFKDVLPSLIFNTSQNWFTNRGESTSTIPGKREHHHQQTTMSRNVILDGSDFQELSPINMLRLSSIVSSRSTLSLHSTVMNSLSAIPGCLERQNLYRFISRMPSLNNYYSSQSFPQPKSSTVSSKQLVKPFYCSHNLLPKTVLDSSQYDLATITKIQSRLFDRSNSNDDNAKPRRRKIKCKKTRTPSNLQSQGEQAVDDSTAIETVTSTPVQTPIPELEEQSPPYLKTTVSIRDKYVIPEKISLNLDSKKDTSKKKPFYFIGLNSQEPSNNWKWGMEDSPPPYH</sequence>